<evidence type="ECO:0000250" key="1"/>
<evidence type="ECO:0000255" key="2"/>
<evidence type="ECO:0000255" key="3">
    <source>
        <dbReference type="PROSITE-ProRule" id="PRU00274"/>
    </source>
</evidence>
<evidence type="ECO:0000269" key="4">
    <source>
    </source>
</evidence>
<evidence type="ECO:0000305" key="5"/>
<reference key="1">
    <citation type="journal article" date="2006" name="Nature">
        <title>The DNA sequence and biological annotation of human chromosome 1.</title>
        <authorList>
            <person name="Gregory S.G."/>
            <person name="Barlow K.F."/>
            <person name="McLay K.E."/>
            <person name="Kaul R."/>
            <person name="Swarbreck D."/>
            <person name="Dunham A."/>
            <person name="Scott C.E."/>
            <person name="Howe K.L."/>
            <person name="Woodfine K."/>
            <person name="Spencer C.C.A."/>
            <person name="Jones M.C."/>
            <person name="Gillson C."/>
            <person name="Searle S."/>
            <person name="Zhou Y."/>
            <person name="Kokocinski F."/>
            <person name="McDonald L."/>
            <person name="Evans R."/>
            <person name="Phillips K."/>
            <person name="Atkinson A."/>
            <person name="Cooper R."/>
            <person name="Jones C."/>
            <person name="Hall R.E."/>
            <person name="Andrews T.D."/>
            <person name="Lloyd C."/>
            <person name="Ainscough R."/>
            <person name="Almeida J.P."/>
            <person name="Ambrose K.D."/>
            <person name="Anderson F."/>
            <person name="Andrew R.W."/>
            <person name="Ashwell R.I.S."/>
            <person name="Aubin K."/>
            <person name="Babbage A.K."/>
            <person name="Bagguley C.L."/>
            <person name="Bailey J."/>
            <person name="Beasley H."/>
            <person name="Bethel G."/>
            <person name="Bird C.P."/>
            <person name="Bray-Allen S."/>
            <person name="Brown J.Y."/>
            <person name="Brown A.J."/>
            <person name="Buckley D."/>
            <person name="Burton J."/>
            <person name="Bye J."/>
            <person name="Carder C."/>
            <person name="Chapman J.C."/>
            <person name="Clark S.Y."/>
            <person name="Clarke G."/>
            <person name="Clee C."/>
            <person name="Cobley V."/>
            <person name="Collier R.E."/>
            <person name="Corby N."/>
            <person name="Coville G.J."/>
            <person name="Davies J."/>
            <person name="Deadman R."/>
            <person name="Dunn M."/>
            <person name="Earthrowl M."/>
            <person name="Ellington A.G."/>
            <person name="Errington H."/>
            <person name="Frankish A."/>
            <person name="Frankland J."/>
            <person name="French L."/>
            <person name="Garner P."/>
            <person name="Garnett J."/>
            <person name="Gay L."/>
            <person name="Ghori M.R.J."/>
            <person name="Gibson R."/>
            <person name="Gilby L.M."/>
            <person name="Gillett W."/>
            <person name="Glithero R.J."/>
            <person name="Grafham D.V."/>
            <person name="Griffiths C."/>
            <person name="Griffiths-Jones S."/>
            <person name="Grocock R."/>
            <person name="Hammond S."/>
            <person name="Harrison E.S.I."/>
            <person name="Hart E."/>
            <person name="Haugen E."/>
            <person name="Heath P.D."/>
            <person name="Holmes S."/>
            <person name="Holt K."/>
            <person name="Howden P.J."/>
            <person name="Hunt A.R."/>
            <person name="Hunt S.E."/>
            <person name="Hunter G."/>
            <person name="Isherwood J."/>
            <person name="James R."/>
            <person name="Johnson C."/>
            <person name="Johnson D."/>
            <person name="Joy A."/>
            <person name="Kay M."/>
            <person name="Kershaw J.K."/>
            <person name="Kibukawa M."/>
            <person name="Kimberley A.M."/>
            <person name="King A."/>
            <person name="Knights A.J."/>
            <person name="Lad H."/>
            <person name="Laird G."/>
            <person name="Lawlor S."/>
            <person name="Leongamornlert D.A."/>
            <person name="Lloyd D.M."/>
            <person name="Loveland J."/>
            <person name="Lovell J."/>
            <person name="Lush M.J."/>
            <person name="Lyne R."/>
            <person name="Martin S."/>
            <person name="Mashreghi-Mohammadi M."/>
            <person name="Matthews L."/>
            <person name="Matthews N.S.W."/>
            <person name="McLaren S."/>
            <person name="Milne S."/>
            <person name="Mistry S."/>
            <person name="Moore M.J.F."/>
            <person name="Nickerson T."/>
            <person name="O'Dell C.N."/>
            <person name="Oliver K."/>
            <person name="Palmeiri A."/>
            <person name="Palmer S.A."/>
            <person name="Parker A."/>
            <person name="Patel D."/>
            <person name="Pearce A.V."/>
            <person name="Peck A.I."/>
            <person name="Pelan S."/>
            <person name="Phelps K."/>
            <person name="Phillimore B.J."/>
            <person name="Plumb R."/>
            <person name="Rajan J."/>
            <person name="Raymond C."/>
            <person name="Rouse G."/>
            <person name="Saenphimmachak C."/>
            <person name="Sehra H.K."/>
            <person name="Sheridan E."/>
            <person name="Shownkeen R."/>
            <person name="Sims S."/>
            <person name="Skuce C.D."/>
            <person name="Smith M."/>
            <person name="Steward C."/>
            <person name="Subramanian S."/>
            <person name="Sycamore N."/>
            <person name="Tracey A."/>
            <person name="Tromans A."/>
            <person name="Van Helmond Z."/>
            <person name="Wall M."/>
            <person name="Wallis J.M."/>
            <person name="White S."/>
            <person name="Whitehead S.L."/>
            <person name="Wilkinson J.E."/>
            <person name="Willey D.L."/>
            <person name="Williams H."/>
            <person name="Wilming L."/>
            <person name="Wray P.W."/>
            <person name="Wu Z."/>
            <person name="Coulson A."/>
            <person name="Vaudin M."/>
            <person name="Sulston J.E."/>
            <person name="Durbin R.M."/>
            <person name="Hubbard T."/>
            <person name="Wooster R."/>
            <person name="Dunham I."/>
            <person name="Carter N.P."/>
            <person name="McVean G."/>
            <person name="Ross M.T."/>
            <person name="Harrow J."/>
            <person name="Olson M.V."/>
            <person name="Beck S."/>
            <person name="Rogers J."/>
            <person name="Bentley D.R."/>
        </authorList>
    </citation>
    <scope>NUCLEOTIDE SEQUENCE [LARGE SCALE GENOMIC DNA]</scope>
</reference>
<reference key="2">
    <citation type="journal article" date="2004" name="Genome Res.">
        <title>The status, quality, and expansion of the NIH full-length cDNA project: the Mammalian Gene Collection (MGC).</title>
        <authorList>
            <consortium name="The MGC Project Team"/>
        </authorList>
    </citation>
    <scope>NUCLEOTIDE SEQUENCE [LARGE SCALE MRNA]</scope>
    <scope>VARIANT VAL-204</scope>
    <source>
        <tissue>Testis</tissue>
    </source>
</reference>
<reference key="3">
    <citation type="journal article" date="2003" name="Nat. Rev. Genet.">
        <title>Human and mouse proteases: a comparative genomic approach.</title>
        <authorList>
            <person name="Puente X.S."/>
            <person name="Sanchez L.M."/>
            <person name="Overall C.M."/>
            <person name="Lopez-Otin C."/>
        </authorList>
    </citation>
    <scope>IDENTIFICATION</scope>
</reference>
<comment type="subcellular location">
    <subcellularLocation>
        <location evidence="5">Secreted</location>
    </subcellularLocation>
</comment>
<comment type="similarity">
    <text evidence="3">Belongs to the peptidase S1 family.</text>
</comment>
<protein>
    <recommendedName>
        <fullName>Serine protease 38</fullName>
        <ecNumber>3.4.21.-</ecNumber>
    </recommendedName>
    <alternativeName>
        <fullName>Marapsin-2</fullName>
    </alternativeName>
</protein>
<gene>
    <name type="primary">PRSS38</name>
    <name type="synonym">MPN2</name>
</gene>
<name>PRS38_HUMAN</name>
<feature type="signal peptide" evidence="2">
    <location>
        <begin position="1"/>
        <end position="32"/>
    </location>
</feature>
<feature type="propeptide" id="PRO_0000328820" description="Activation peptide" evidence="2">
    <location>
        <begin position="33"/>
        <end position="59"/>
    </location>
</feature>
<feature type="chain" id="PRO_0000328821" description="Serine protease 38">
    <location>
        <begin position="60"/>
        <end position="326"/>
    </location>
</feature>
<feature type="domain" description="Peptidase S1" evidence="3">
    <location>
        <begin position="60"/>
        <end position="293"/>
    </location>
</feature>
<feature type="active site" description="Charge relay system" evidence="1">
    <location>
        <position position="100"/>
    </location>
</feature>
<feature type="active site" description="Charge relay system" evidence="1">
    <location>
        <position position="150"/>
    </location>
</feature>
<feature type="active site" description="Charge relay system" evidence="1">
    <location>
        <position position="245"/>
    </location>
</feature>
<feature type="glycosylation site" description="N-linked (GlcNAc...) asparagine" evidence="2">
    <location>
        <position position="125"/>
    </location>
</feature>
<feature type="disulfide bond" evidence="3">
    <location>
        <begin position="85"/>
        <end position="101"/>
    </location>
</feature>
<feature type="disulfide bond" evidence="3">
    <location>
        <begin position="183"/>
        <end position="251"/>
    </location>
</feature>
<feature type="disulfide bond" evidence="3">
    <location>
        <begin position="214"/>
        <end position="230"/>
    </location>
</feature>
<feature type="disulfide bond" evidence="3">
    <location>
        <begin position="241"/>
        <end position="269"/>
    </location>
</feature>
<feature type="sequence variant" id="VAR_042531" description="In dbSNP:rs9426581." evidence="4">
    <original>M</original>
    <variation>V</variation>
    <location>
        <position position="204"/>
    </location>
</feature>
<feature type="sequence conflict" description="In Ref. 2; AAI30401." evidence="5" ref="2">
    <original>A</original>
    <variation>D</variation>
    <location>
        <position position="123"/>
    </location>
</feature>
<sequence length="326" mass="35356">MAAPASVMGPLGPSALGLLLLLLVVAPPRVAALVHRQPENQGISLTGSVACGRPSMEGKILGGVPAPERKWPWQVSVHYAGLHVCGGSILNEYWVLSAAHCFHRDKNIKIYDMYVGLVNLRVAGNHTQWYEVNRVILHPTYEMYHPIGGDVALVQLKTRIVFSESVLPVCLATPEVNLTSANCWATGWGLVSKQGETSDELQEMQLPLILEPWCHLLYGHMSYIMPDMLCAGDILNAKTVCEGDSGGPLVCEFNRSWLQIGIVSWGRGCSNPLYPGVYASVSYFSKWICDNIEITPTPAQPAPALSPALGPTLSVLMAMLAGWSVL</sequence>
<accession>A1L453</accession>
<accession>Q7RTY6</accession>
<organism>
    <name type="scientific">Homo sapiens</name>
    <name type="common">Human</name>
    <dbReference type="NCBI Taxonomy" id="9606"/>
    <lineage>
        <taxon>Eukaryota</taxon>
        <taxon>Metazoa</taxon>
        <taxon>Chordata</taxon>
        <taxon>Craniata</taxon>
        <taxon>Vertebrata</taxon>
        <taxon>Euteleostomi</taxon>
        <taxon>Mammalia</taxon>
        <taxon>Eutheria</taxon>
        <taxon>Euarchontoglires</taxon>
        <taxon>Primates</taxon>
        <taxon>Haplorrhini</taxon>
        <taxon>Catarrhini</taxon>
        <taxon>Hominidae</taxon>
        <taxon>Homo</taxon>
    </lineage>
</organism>
<keyword id="KW-1015">Disulfide bond</keyword>
<keyword id="KW-0325">Glycoprotein</keyword>
<keyword id="KW-0378">Hydrolase</keyword>
<keyword id="KW-0645">Protease</keyword>
<keyword id="KW-1267">Proteomics identification</keyword>
<keyword id="KW-1185">Reference proteome</keyword>
<keyword id="KW-0964">Secreted</keyword>
<keyword id="KW-0720">Serine protease</keyword>
<keyword id="KW-0732">Signal</keyword>
<dbReference type="EC" id="3.4.21.-"/>
<dbReference type="EMBL" id="AL356323">
    <property type="status" value="NOT_ANNOTATED_CDS"/>
    <property type="molecule type" value="Genomic_DNA"/>
</dbReference>
<dbReference type="EMBL" id="AL731702">
    <property type="status" value="NOT_ANNOTATED_CDS"/>
    <property type="molecule type" value="Genomic_DNA"/>
</dbReference>
<dbReference type="EMBL" id="BC130400">
    <property type="protein sequence ID" value="AAI30401.1"/>
    <property type="molecule type" value="mRNA"/>
</dbReference>
<dbReference type="EMBL" id="BN000131">
    <property type="protein sequence ID" value="CAD67593.1"/>
    <property type="molecule type" value="mRNA"/>
</dbReference>
<dbReference type="CCDS" id="CCDS1563.1"/>
<dbReference type="RefSeq" id="NP_898885.1">
    <property type="nucleotide sequence ID" value="NM_183062.3"/>
</dbReference>
<dbReference type="SMR" id="A1L453"/>
<dbReference type="BioGRID" id="130896">
    <property type="interactions" value="1"/>
</dbReference>
<dbReference type="FunCoup" id="A1L453">
    <property type="interactions" value="53"/>
</dbReference>
<dbReference type="IntAct" id="A1L453">
    <property type="interactions" value="1"/>
</dbReference>
<dbReference type="STRING" id="9606.ENSP00000355719"/>
<dbReference type="MEROPS" id="S01.318"/>
<dbReference type="GlyCosmos" id="A1L453">
    <property type="glycosylation" value="1 site, No reported glycans"/>
</dbReference>
<dbReference type="GlyGen" id="A1L453">
    <property type="glycosylation" value="2 sites"/>
</dbReference>
<dbReference type="iPTMnet" id="A1L453"/>
<dbReference type="PhosphoSitePlus" id="A1L453"/>
<dbReference type="BioMuta" id="PRSS38"/>
<dbReference type="MassIVE" id="A1L453"/>
<dbReference type="PaxDb" id="9606-ENSP00000355719"/>
<dbReference type="PeptideAtlas" id="A1L453"/>
<dbReference type="ProteomicsDB" id="147"/>
<dbReference type="Antibodypedia" id="20773">
    <property type="antibodies" value="26 antibodies from 12 providers"/>
</dbReference>
<dbReference type="DNASU" id="339501"/>
<dbReference type="Ensembl" id="ENST00000366757.4">
    <property type="protein sequence ID" value="ENSP00000355719.3"/>
    <property type="gene ID" value="ENSG00000185888.6"/>
</dbReference>
<dbReference type="GeneID" id="339501"/>
<dbReference type="KEGG" id="hsa:339501"/>
<dbReference type="MANE-Select" id="ENST00000366757.4">
    <property type="protein sequence ID" value="ENSP00000355719.3"/>
    <property type="RefSeq nucleotide sequence ID" value="NM_183062.3"/>
    <property type="RefSeq protein sequence ID" value="NP_898885.1"/>
</dbReference>
<dbReference type="UCSC" id="uc001hrh.4">
    <property type="organism name" value="human"/>
</dbReference>
<dbReference type="AGR" id="HGNC:29625"/>
<dbReference type="CTD" id="339501"/>
<dbReference type="GeneCards" id="PRSS38"/>
<dbReference type="HGNC" id="HGNC:29625">
    <property type="gene designation" value="PRSS38"/>
</dbReference>
<dbReference type="HPA" id="ENSG00000185888">
    <property type="expression patterns" value="Tissue enriched (testis)"/>
</dbReference>
<dbReference type="neXtProt" id="NX_A1L453"/>
<dbReference type="OpenTargets" id="ENSG00000185888"/>
<dbReference type="PharmGKB" id="PA165752268"/>
<dbReference type="VEuPathDB" id="HostDB:ENSG00000185888"/>
<dbReference type="eggNOG" id="KOG3627">
    <property type="taxonomic scope" value="Eukaryota"/>
</dbReference>
<dbReference type="GeneTree" id="ENSGT00940000154494"/>
<dbReference type="HOGENOM" id="CLU_006842_0_4_1"/>
<dbReference type="InParanoid" id="A1L453"/>
<dbReference type="OMA" id="LVCEFNH"/>
<dbReference type="OrthoDB" id="10002959at2759"/>
<dbReference type="PAN-GO" id="A1L453">
    <property type="GO annotations" value="2 GO annotations based on evolutionary models"/>
</dbReference>
<dbReference type="PhylomeDB" id="A1L453"/>
<dbReference type="TreeFam" id="TF351676"/>
<dbReference type="PathwayCommons" id="A1L453"/>
<dbReference type="SignaLink" id="A1L453"/>
<dbReference type="BioGRID-ORCS" id="339501">
    <property type="hits" value="6 hits in 1139 CRISPR screens"/>
</dbReference>
<dbReference type="GenomeRNAi" id="339501"/>
<dbReference type="Pharos" id="A1L453">
    <property type="development level" value="Tdark"/>
</dbReference>
<dbReference type="PRO" id="PR:A1L453"/>
<dbReference type="Proteomes" id="UP000005640">
    <property type="component" value="Chromosome 1"/>
</dbReference>
<dbReference type="RNAct" id="A1L453">
    <property type="molecule type" value="protein"/>
</dbReference>
<dbReference type="Bgee" id="ENSG00000185888">
    <property type="expression patterns" value="Expressed in primordial germ cell in gonad and 6 other cell types or tissues"/>
</dbReference>
<dbReference type="GO" id="GO:0005576">
    <property type="term" value="C:extracellular region"/>
    <property type="evidence" value="ECO:0007669"/>
    <property type="project" value="UniProtKB-SubCell"/>
</dbReference>
<dbReference type="GO" id="GO:0004252">
    <property type="term" value="F:serine-type endopeptidase activity"/>
    <property type="evidence" value="ECO:0000318"/>
    <property type="project" value="GO_Central"/>
</dbReference>
<dbReference type="GO" id="GO:0006508">
    <property type="term" value="P:proteolysis"/>
    <property type="evidence" value="ECO:0000318"/>
    <property type="project" value="GO_Central"/>
</dbReference>
<dbReference type="CDD" id="cd00190">
    <property type="entry name" value="Tryp_SPc"/>
    <property type="match status" value="1"/>
</dbReference>
<dbReference type="FunFam" id="2.40.10.10:FF:000039">
    <property type="entry name" value="Brain-specific serine protease 4"/>
    <property type="match status" value="1"/>
</dbReference>
<dbReference type="Gene3D" id="2.40.10.10">
    <property type="entry name" value="Trypsin-like serine proteases"/>
    <property type="match status" value="1"/>
</dbReference>
<dbReference type="InterPro" id="IPR009003">
    <property type="entry name" value="Peptidase_S1_PA"/>
</dbReference>
<dbReference type="InterPro" id="IPR043504">
    <property type="entry name" value="Peptidase_S1_PA_chymotrypsin"/>
</dbReference>
<dbReference type="InterPro" id="IPR001314">
    <property type="entry name" value="Peptidase_S1A"/>
</dbReference>
<dbReference type="InterPro" id="IPR001254">
    <property type="entry name" value="Trypsin_dom"/>
</dbReference>
<dbReference type="InterPro" id="IPR018114">
    <property type="entry name" value="TRYPSIN_HIS"/>
</dbReference>
<dbReference type="InterPro" id="IPR033116">
    <property type="entry name" value="TRYPSIN_SER"/>
</dbReference>
<dbReference type="PANTHER" id="PTHR24253:SF159">
    <property type="entry name" value="SERINE PROTEASE 42"/>
    <property type="match status" value="1"/>
</dbReference>
<dbReference type="PANTHER" id="PTHR24253">
    <property type="entry name" value="TRANSMEMBRANE PROTEASE SERINE"/>
    <property type="match status" value="1"/>
</dbReference>
<dbReference type="Pfam" id="PF00089">
    <property type="entry name" value="Trypsin"/>
    <property type="match status" value="1"/>
</dbReference>
<dbReference type="PRINTS" id="PR00722">
    <property type="entry name" value="CHYMOTRYPSIN"/>
</dbReference>
<dbReference type="SMART" id="SM00020">
    <property type="entry name" value="Tryp_SPc"/>
    <property type="match status" value="1"/>
</dbReference>
<dbReference type="SUPFAM" id="SSF50494">
    <property type="entry name" value="Trypsin-like serine proteases"/>
    <property type="match status" value="1"/>
</dbReference>
<dbReference type="PROSITE" id="PS50240">
    <property type="entry name" value="TRYPSIN_DOM"/>
    <property type="match status" value="1"/>
</dbReference>
<dbReference type="PROSITE" id="PS00134">
    <property type="entry name" value="TRYPSIN_HIS"/>
    <property type="match status" value="1"/>
</dbReference>
<dbReference type="PROSITE" id="PS00135">
    <property type="entry name" value="TRYPSIN_SER"/>
    <property type="match status" value="1"/>
</dbReference>
<proteinExistence type="evidence at protein level"/>